<comment type="function">
    <text evidence="1">IF-3 binds to the 30S ribosomal subunit and shifts the equilibrium between 70S ribosomes and their 50S and 30S subunits in favor of the free subunits, thus enhancing the availability of 30S subunits on which protein synthesis initiation begins.</text>
</comment>
<comment type="subunit">
    <text evidence="1">Monomer.</text>
</comment>
<comment type="subcellular location">
    <subcellularLocation>
        <location evidence="1">Cytoplasm</location>
    </subcellularLocation>
</comment>
<comment type="similarity">
    <text evidence="1">Belongs to the IF-3 family.</text>
</comment>
<reference key="1">
    <citation type="journal article" date="2006" name="Proc. Natl. Acad. Sci. U.S.A.">
        <title>Molecular genetic anatomy of inter- and intraserotype variation in the human bacterial pathogen group A Streptococcus.</title>
        <authorList>
            <person name="Beres S.B."/>
            <person name="Richter E.W."/>
            <person name="Nagiec M.J."/>
            <person name="Sumby P."/>
            <person name="Porcella S.F."/>
            <person name="DeLeo F.R."/>
            <person name="Musser J.M."/>
        </authorList>
    </citation>
    <scope>NUCLEOTIDE SEQUENCE [LARGE SCALE GENOMIC DNA]</scope>
    <source>
        <strain>MGAS9429</strain>
    </source>
</reference>
<evidence type="ECO:0000255" key="1">
    <source>
        <dbReference type="HAMAP-Rule" id="MF_00080"/>
    </source>
</evidence>
<organism>
    <name type="scientific">Streptococcus pyogenes serotype M12 (strain MGAS9429)</name>
    <dbReference type="NCBI Taxonomy" id="370551"/>
    <lineage>
        <taxon>Bacteria</taxon>
        <taxon>Bacillati</taxon>
        <taxon>Bacillota</taxon>
        <taxon>Bacilli</taxon>
        <taxon>Lactobacillales</taxon>
        <taxon>Streptococcaceae</taxon>
        <taxon>Streptococcus</taxon>
    </lineage>
</organism>
<proteinExistence type="inferred from homology"/>
<gene>
    <name evidence="1" type="primary">infC</name>
    <name type="ordered locus">MGAS9429_Spy0674</name>
</gene>
<accession>Q1JMF0</accession>
<sequence length="176" mass="20054">MKIIAKKDLFINDEIRVREVRLVGLEGEQLGIKPLSEAQSLADASNVDLVLIQPQAVPPVAKLMDYGKFKFEYQKKQKEQRKKQSVVTVKEVRLSPVIDKGDFETKLRNGRKFLEKGNKVKVSIRFKGRMITHKEIGAKVLADFAEATQDIAIIEQRAKMDGRQMFMQLAPISDKK</sequence>
<feature type="chain" id="PRO_1000004573" description="Translation initiation factor IF-3">
    <location>
        <begin position="1"/>
        <end position="176"/>
    </location>
</feature>
<dbReference type="EMBL" id="CP000259">
    <property type="protein sequence ID" value="ABF31862.1"/>
    <property type="molecule type" value="Genomic_DNA"/>
</dbReference>
<dbReference type="RefSeq" id="WP_002985152.1">
    <property type="nucleotide sequence ID" value="NC_008021.1"/>
</dbReference>
<dbReference type="SMR" id="Q1JMF0"/>
<dbReference type="GeneID" id="69901077"/>
<dbReference type="KEGG" id="spk:MGAS9429_Spy0674"/>
<dbReference type="HOGENOM" id="CLU_054919_3_2_9"/>
<dbReference type="Proteomes" id="UP000002433">
    <property type="component" value="Chromosome"/>
</dbReference>
<dbReference type="GO" id="GO:0005829">
    <property type="term" value="C:cytosol"/>
    <property type="evidence" value="ECO:0007669"/>
    <property type="project" value="TreeGrafter"/>
</dbReference>
<dbReference type="GO" id="GO:0016020">
    <property type="term" value="C:membrane"/>
    <property type="evidence" value="ECO:0007669"/>
    <property type="project" value="TreeGrafter"/>
</dbReference>
<dbReference type="GO" id="GO:0043022">
    <property type="term" value="F:ribosome binding"/>
    <property type="evidence" value="ECO:0007669"/>
    <property type="project" value="TreeGrafter"/>
</dbReference>
<dbReference type="GO" id="GO:0003743">
    <property type="term" value="F:translation initiation factor activity"/>
    <property type="evidence" value="ECO:0007669"/>
    <property type="project" value="UniProtKB-UniRule"/>
</dbReference>
<dbReference type="GO" id="GO:0032790">
    <property type="term" value="P:ribosome disassembly"/>
    <property type="evidence" value="ECO:0007669"/>
    <property type="project" value="TreeGrafter"/>
</dbReference>
<dbReference type="FunFam" id="3.10.20.80:FF:000001">
    <property type="entry name" value="Translation initiation factor IF-3"/>
    <property type="match status" value="1"/>
</dbReference>
<dbReference type="FunFam" id="3.30.110.10:FF:000001">
    <property type="entry name" value="Translation initiation factor IF-3"/>
    <property type="match status" value="1"/>
</dbReference>
<dbReference type="Gene3D" id="3.30.110.10">
    <property type="entry name" value="Translation initiation factor 3 (IF-3), C-terminal domain"/>
    <property type="match status" value="1"/>
</dbReference>
<dbReference type="Gene3D" id="3.10.20.80">
    <property type="entry name" value="Translation initiation factor 3 (IF-3), N-terminal domain"/>
    <property type="match status" value="1"/>
</dbReference>
<dbReference type="HAMAP" id="MF_00080">
    <property type="entry name" value="IF_3"/>
    <property type="match status" value="1"/>
</dbReference>
<dbReference type="InterPro" id="IPR036788">
    <property type="entry name" value="T_IF-3_C_sf"/>
</dbReference>
<dbReference type="InterPro" id="IPR036787">
    <property type="entry name" value="T_IF-3_N_sf"/>
</dbReference>
<dbReference type="InterPro" id="IPR019813">
    <property type="entry name" value="Translation_initiation_fac3_CS"/>
</dbReference>
<dbReference type="InterPro" id="IPR001288">
    <property type="entry name" value="Translation_initiation_fac_3"/>
</dbReference>
<dbReference type="InterPro" id="IPR019815">
    <property type="entry name" value="Translation_initiation_fac_3_C"/>
</dbReference>
<dbReference type="InterPro" id="IPR019814">
    <property type="entry name" value="Translation_initiation_fac_3_N"/>
</dbReference>
<dbReference type="NCBIfam" id="TIGR00168">
    <property type="entry name" value="infC"/>
    <property type="match status" value="1"/>
</dbReference>
<dbReference type="PANTHER" id="PTHR10938">
    <property type="entry name" value="TRANSLATION INITIATION FACTOR IF-3"/>
    <property type="match status" value="1"/>
</dbReference>
<dbReference type="PANTHER" id="PTHR10938:SF0">
    <property type="entry name" value="TRANSLATION INITIATION FACTOR IF-3, MITOCHONDRIAL"/>
    <property type="match status" value="1"/>
</dbReference>
<dbReference type="Pfam" id="PF00707">
    <property type="entry name" value="IF3_C"/>
    <property type="match status" value="1"/>
</dbReference>
<dbReference type="Pfam" id="PF05198">
    <property type="entry name" value="IF3_N"/>
    <property type="match status" value="1"/>
</dbReference>
<dbReference type="SUPFAM" id="SSF55200">
    <property type="entry name" value="Translation initiation factor IF3, C-terminal domain"/>
    <property type="match status" value="1"/>
</dbReference>
<dbReference type="SUPFAM" id="SSF54364">
    <property type="entry name" value="Translation initiation factor IF3, N-terminal domain"/>
    <property type="match status" value="1"/>
</dbReference>
<dbReference type="PROSITE" id="PS00938">
    <property type="entry name" value="IF3"/>
    <property type="match status" value="1"/>
</dbReference>
<protein>
    <recommendedName>
        <fullName evidence="1">Translation initiation factor IF-3</fullName>
    </recommendedName>
</protein>
<name>IF3_STRPC</name>
<keyword id="KW-0963">Cytoplasm</keyword>
<keyword id="KW-0396">Initiation factor</keyword>
<keyword id="KW-0648">Protein biosynthesis</keyword>